<dbReference type="EC" id="2.7.2.1" evidence="1"/>
<dbReference type="EMBL" id="CP000444">
    <property type="protein sequence ID" value="ABI42556.1"/>
    <property type="molecule type" value="Genomic_DNA"/>
</dbReference>
<dbReference type="SMR" id="Q0HWE9"/>
<dbReference type="KEGG" id="shm:Shewmr7_1558"/>
<dbReference type="HOGENOM" id="CLU_020352_0_1_6"/>
<dbReference type="UniPathway" id="UPA00340">
    <property type="reaction ID" value="UER00458"/>
</dbReference>
<dbReference type="GO" id="GO:0005829">
    <property type="term" value="C:cytosol"/>
    <property type="evidence" value="ECO:0007669"/>
    <property type="project" value="TreeGrafter"/>
</dbReference>
<dbReference type="GO" id="GO:0008776">
    <property type="term" value="F:acetate kinase activity"/>
    <property type="evidence" value="ECO:0007669"/>
    <property type="project" value="UniProtKB-UniRule"/>
</dbReference>
<dbReference type="GO" id="GO:0005524">
    <property type="term" value="F:ATP binding"/>
    <property type="evidence" value="ECO:0007669"/>
    <property type="project" value="UniProtKB-KW"/>
</dbReference>
<dbReference type="GO" id="GO:0000287">
    <property type="term" value="F:magnesium ion binding"/>
    <property type="evidence" value="ECO:0007669"/>
    <property type="project" value="UniProtKB-UniRule"/>
</dbReference>
<dbReference type="GO" id="GO:0006083">
    <property type="term" value="P:acetate metabolic process"/>
    <property type="evidence" value="ECO:0007669"/>
    <property type="project" value="TreeGrafter"/>
</dbReference>
<dbReference type="GO" id="GO:0006085">
    <property type="term" value="P:acetyl-CoA biosynthetic process"/>
    <property type="evidence" value="ECO:0007669"/>
    <property type="project" value="UniProtKB-UniRule"/>
</dbReference>
<dbReference type="CDD" id="cd24010">
    <property type="entry name" value="ASKHA_NBD_AcK_PK"/>
    <property type="match status" value="1"/>
</dbReference>
<dbReference type="FunFam" id="3.30.420.40:FF:000041">
    <property type="entry name" value="Acetate kinase"/>
    <property type="match status" value="1"/>
</dbReference>
<dbReference type="Gene3D" id="3.30.420.40">
    <property type="match status" value="2"/>
</dbReference>
<dbReference type="HAMAP" id="MF_00020">
    <property type="entry name" value="Acetate_kinase"/>
    <property type="match status" value="1"/>
</dbReference>
<dbReference type="InterPro" id="IPR004372">
    <property type="entry name" value="Ac/propionate_kinase"/>
</dbReference>
<dbReference type="InterPro" id="IPR000890">
    <property type="entry name" value="Aliphatic_acid_kin_short-chain"/>
</dbReference>
<dbReference type="InterPro" id="IPR023865">
    <property type="entry name" value="Aliphatic_acid_kinase_CS"/>
</dbReference>
<dbReference type="InterPro" id="IPR043129">
    <property type="entry name" value="ATPase_NBD"/>
</dbReference>
<dbReference type="NCBIfam" id="TIGR00016">
    <property type="entry name" value="ackA"/>
    <property type="match status" value="1"/>
</dbReference>
<dbReference type="PANTHER" id="PTHR21060">
    <property type="entry name" value="ACETATE KINASE"/>
    <property type="match status" value="1"/>
</dbReference>
<dbReference type="PANTHER" id="PTHR21060:SF21">
    <property type="entry name" value="ACETATE KINASE"/>
    <property type="match status" value="1"/>
</dbReference>
<dbReference type="Pfam" id="PF00871">
    <property type="entry name" value="Acetate_kinase"/>
    <property type="match status" value="1"/>
</dbReference>
<dbReference type="PIRSF" id="PIRSF000722">
    <property type="entry name" value="Acetate_prop_kin"/>
    <property type="match status" value="1"/>
</dbReference>
<dbReference type="PRINTS" id="PR00471">
    <property type="entry name" value="ACETATEKNASE"/>
</dbReference>
<dbReference type="SUPFAM" id="SSF53067">
    <property type="entry name" value="Actin-like ATPase domain"/>
    <property type="match status" value="2"/>
</dbReference>
<dbReference type="PROSITE" id="PS01075">
    <property type="entry name" value="ACETATE_KINASE_1"/>
    <property type="match status" value="1"/>
</dbReference>
<dbReference type="PROSITE" id="PS01076">
    <property type="entry name" value="ACETATE_KINASE_2"/>
    <property type="match status" value="1"/>
</dbReference>
<organism>
    <name type="scientific">Shewanella sp. (strain MR-7)</name>
    <dbReference type="NCBI Taxonomy" id="60481"/>
    <lineage>
        <taxon>Bacteria</taxon>
        <taxon>Pseudomonadati</taxon>
        <taxon>Pseudomonadota</taxon>
        <taxon>Gammaproteobacteria</taxon>
        <taxon>Alteromonadales</taxon>
        <taxon>Shewanellaceae</taxon>
        <taxon>Shewanella</taxon>
    </lineage>
</organism>
<name>ACKA_SHESR</name>
<proteinExistence type="inferred from homology"/>
<feature type="chain" id="PRO_1000002259" description="Acetate kinase">
    <location>
        <begin position="1"/>
        <end position="399"/>
    </location>
</feature>
<feature type="active site" description="Proton donor/acceptor" evidence="1">
    <location>
        <position position="148"/>
    </location>
</feature>
<feature type="binding site" evidence="1">
    <location>
        <position position="10"/>
    </location>
    <ligand>
        <name>Mg(2+)</name>
        <dbReference type="ChEBI" id="CHEBI:18420"/>
    </ligand>
</feature>
<feature type="binding site" evidence="1">
    <location>
        <position position="17"/>
    </location>
    <ligand>
        <name>ATP</name>
        <dbReference type="ChEBI" id="CHEBI:30616"/>
    </ligand>
</feature>
<feature type="binding site" evidence="1">
    <location>
        <position position="91"/>
    </location>
    <ligand>
        <name>substrate</name>
    </ligand>
</feature>
<feature type="binding site" evidence="1">
    <location>
        <begin position="208"/>
        <end position="212"/>
    </location>
    <ligand>
        <name>ATP</name>
        <dbReference type="ChEBI" id="CHEBI:30616"/>
    </ligand>
</feature>
<feature type="binding site" evidence="1">
    <location>
        <begin position="283"/>
        <end position="285"/>
    </location>
    <ligand>
        <name>ATP</name>
        <dbReference type="ChEBI" id="CHEBI:30616"/>
    </ligand>
</feature>
<feature type="binding site" evidence="1">
    <location>
        <begin position="331"/>
        <end position="335"/>
    </location>
    <ligand>
        <name>ATP</name>
        <dbReference type="ChEBI" id="CHEBI:30616"/>
    </ligand>
</feature>
<feature type="binding site" evidence="1">
    <location>
        <position position="385"/>
    </location>
    <ligand>
        <name>Mg(2+)</name>
        <dbReference type="ChEBI" id="CHEBI:18420"/>
    </ligand>
</feature>
<feature type="site" description="Transition state stabilizer" evidence="1">
    <location>
        <position position="180"/>
    </location>
</feature>
<feature type="site" description="Transition state stabilizer" evidence="1">
    <location>
        <position position="241"/>
    </location>
</feature>
<gene>
    <name evidence="1" type="primary">ackA</name>
    <name type="ordered locus">Shewmr7_1558</name>
</gene>
<reference key="1">
    <citation type="submission" date="2006-08" db="EMBL/GenBank/DDBJ databases">
        <title>Complete sequence of chromosome 1 of Shewanella sp. MR-7.</title>
        <authorList>
            <person name="Copeland A."/>
            <person name="Lucas S."/>
            <person name="Lapidus A."/>
            <person name="Barry K."/>
            <person name="Detter J.C."/>
            <person name="Glavina del Rio T."/>
            <person name="Hammon N."/>
            <person name="Israni S."/>
            <person name="Dalin E."/>
            <person name="Tice H."/>
            <person name="Pitluck S."/>
            <person name="Kiss H."/>
            <person name="Brettin T."/>
            <person name="Bruce D."/>
            <person name="Han C."/>
            <person name="Tapia R."/>
            <person name="Gilna P."/>
            <person name="Schmutz J."/>
            <person name="Larimer F."/>
            <person name="Land M."/>
            <person name="Hauser L."/>
            <person name="Kyrpides N."/>
            <person name="Mikhailova N."/>
            <person name="Nealson K."/>
            <person name="Konstantinidis K."/>
            <person name="Klappenbach J."/>
            <person name="Tiedje J."/>
            <person name="Richardson P."/>
        </authorList>
    </citation>
    <scope>NUCLEOTIDE SEQUENCE [LARGE SCALE GENOMIC DNA]</scope>
    <source>
        <strain>MR-7</strain>
    </source>
</reference>
<accession>Q0HWE9</accession>
<evidence type="ECO:0000255" key="1">
    <source>
        <dbReference type="HAMAP-Rule" id="MF_00020"/>
    </source>
</evidence>
<keyword id="KW-0067">ATP-binding</keyword>
<keyword id="KW-0963">Cytoplasm</keyword>
<keyword id="KW-0418">Kinase</keyword>
<keyword id="KW-0460">Magnesium</keyword>
<keyword id="KW-0479">Metal-binding</keyword>
<keyword id="KW-0547">Nucleotide-binding</keyword>
<keyword id="KW-0808">Transferase</keyword>
<protein>
    <recommendedName>
        <fullName evidence="1">Acetate kinase</fullName>
        <ecNumber evidence="1">2.7.2.1</ecNumber>
    </recommendedName>
    <alternativeName>
        <fullName evidence="1">Acetokinase</fullName>
    </alternativeName>
</protein>
<comment type="function">
    <text evidence="1">Catalyzes the formation of acetyl phosphate from acetate and ATP. Can also catalyze the reverse reaction.</text>
</comment>
<comment type="catalytic activity">
    <reaction evidence="1">
        <text>acetate + ATP = acetyl phosphate + ADP</text>
        <dbReference type="Rhea" id="RHEA:11352"/>
        <dbReference type="ChEBI" id="CHEBI:22191"/>
        <dbReference type="ChEBI" id="CHEBI:30089"/>
        <dbReference type="ChEBI" id="CHEBI:30616"/>
        <dbReference type="ChEBI" id="CHEBI:456216"/>
        <dbReference type="EC" id="2.7.2.1"/>
    </reaction>
</comment>
<comment type="cofactor">
    <cofactor evidence="1">
        <name>Mg(2+)</name>
        <dbReference type="ChEBI" id="CHEBI:18420"/>
    </cofactor>
    <cofactor evidence="1">
        <name>Mn(2+)</name>
        <dbReference type="ChEBI" id="CHEBI:29035"/>
    </cofactor>
    <text evidence="1">Mg(2+). Can also accept Mn(2+).</text>
</comment>
<comment type="pathway">
    <text evidence="1">Metabolic intermediate biosynthesis; acetyl-CoA biosynthesis; acetyl-CoA from acetate: step 1/2.</text>
</comment>
<comment type="subunit">
    <text evidence="1">Homodimer.</text>
</comment>
<comment type="subcellular location">
    <subcellularLocation>
        <location evidence="1">Cytoplasm</location>
    </subcellularLocation>
</comment>
<comment type="similarity">
    <text evidence="1">Belongs to the acetokinase family.</text>
</comment>
<sequence length="399" mass="43565">MSNKLVLVLNCGSSSLKFAVIDAQTGDDQISGLAECFGLEDSRIKWKINGEKHESSLGAFTAHREAVEFIVNKILAGQPELAAQIQAVGHRIVHGGEKFTRSVIIDEHVIKGIEECSSLAPLHNPAHLIGIRAAIASFPKLPQVAVFDTAFHQSMPERAFIYALPYKLYREHGIRRYGMHGTSHLFVSREAAKVLNKPLEETNVICAHLGNGASVTAVKGGKSVDTSMGLTPLEGLVMGTRCGDLDPSIIYHLVHQLGYTLEEVNNLMNKQSGLLGISELTNDCRGIEEGYADGHKGATLALEIFCYRLAKYIASYTVPLGRLDAVVFTGGIGENSDIIREKVLNMLQIFNFHVDSERNKAARFGKKGIITTDNSTVAMVIPTNEEWVIAEDSIKLITK</sequence>